<name>CP3AG_MOUSE</name>
<evidence type="ECO:0000250" key="1"/>
<evidence type="ECO:0000305" key="2"/>
<protein>
    <recommendedName>
        <fullName>Cytochrome P450 3A16</fullName>
        <ecNumber>1.14.14.1</ecNumber>
    </recommendedName>
    <alternativeName>
        <fullName>CYPIIIA16</fullName>
    </alternativeName>
</protein>
<gene>
    <name type="primary">Cyp3a16</name>
    <name type="synonym">Cyp3a-16</name>
</gene>
<accession>Q64481</accession>
<accession>E9QP65</accession>
<dbReference type="EC" id="1.14.14.1"/>
<dbReference type="EMBL" id="D26137">
    <property type="protein sequence ID" value="BAA05133.1"/>
    <property type="molecule type" value="mRNA"/>
</dbReference>
<dbReference type="EMBL" id="AC115895">
    <property type="status" value="NOT_ANNOTATED_CDS"/>
    <property type="molecule type" value="Genomic_DNA"/>
</dbReference>
<dbReference type="CCDS" id="CCDS19862.1"/>
<dbReference type="PIR" id="S50892">
    <property type="entry name" value="S50892"/>
</dbReference>
<dbReference type="RefSeq" id="NP_031846.2">
    <property type="nucleotide sequence ID" value="NM_007820.2"/>
</dbReference>
<dbReference type="SMR" id="Q64481"/>
<dbReference type="FunCoup" id="Q64481">
    <property type="interactions" value="823"/>
</dbReference>
<dbReference type="STRING" id="10090.ENSMUSP00000031633"/>
<dbReference type="ChEMBL" id="CHEMBL3637781"/>
<dbReference type="iPTMnet" id="Q64481"/>
<dbReference type="PhosphoSitePlus" id="Q64481"/>
<dbReference type="jPOST" id="Q64481"/>
<dbReference type="PaxDb" id="10090-ENSMUSP00000031633"/>
<dbReference type="ProteomicsDB" id="284000"/>
<dbReference type="DNASU" id="13114"/>
<dbReference type="Ensembl" id="ENSMUST00000031633.5">
    <property type="protein sequence ID" value="ENSMUSP00000031633.5"/>
    <property type="gene ID" value="ENSMUSG00000038656.6"/>
</dbReference>
<dbReference type="GeneID" id="13114"/>
<dbReference type="KEGG" id="mmu:13114"/>
<dbReference type="UCSC" id="uc009amv.2">
    <property type="organism name" value="mouse"/>
</dbReference>
<dbReference type="AGR" id="MGI:106099"/>
<dbReference type="CTD" id="13114"/>
<dbReference type="MGI" id="MGI:106099">
    <property type="gene designation" value="Cyp3a16"/>
</dbReference>
<dbReference type="VEuPathDB" id="HostDB:ENSMUSG00000038656"/>
<dbReference type="eggNOG" id="KOG0158">
    <property type="taxonomic scope" value="Eukaryota"/>
</dbReference>
<dbReference type="GeneTree" id="ENSGT00950000182958"/>
<dbReference type="HOGENOM" id="CLU_001570_5_2_1"/>
<dbReference type="InParanoid" id="Q64481"/>
<dbReference type="OMA" id="VISETLW"/>
<dbReference type="OrthoDB" id="1470350at2759"/>
<dbReference type="PhylomeDB" id="Q64481"/>
<dbReference type="TreeFam" id="TF105087"/>
<dbReference type="Reactome" id="R-MMU-211945">
    <property type="pathway name" value="Phase I - Functionalization of compounds"/>
</dbReference>
<dbReference type="Reactome" id="R-MMU-211958">
    <property type="pathway name" value="Miscellaneous substrates"/>
</dbReference>
<dbReference type="Reactome" id="R-MMU-211981">
    <property type="pathway name" value="Xenobiotics"/>
</dbReference>
<dbReference type="Reactome" id="R-MMU-5423646">
    <property type="pathway name" value="Aflatoxin activation and detoxification"/>
</dbReference>
<dbReference type="Reactome" id="R-MMU-9027307">
    <property type="pathway name" value="Biosynthesis of maresin-like SPMs"/>
</dbReference>
<dbReference type="Reactome" id="R-MMU-9749641">
    <property type="pathway name" value="Aspirin ADME"/>
</dbReference>
<dbReference type="Reactome" id="R-MMU-9754706">
    <property type="pathway name" value="Atorvastatin ADME"/>
</dbReference>
<dbReference type="Reactome" id="R-MMU-9757110">
    <property type="pathway name" value="Prednisone ADME"/>
</dbReference>
<dbReference type="BioGRID-ORCS" id="13114">
    <property type="hits" value="4 hits in 80 CRISPR screens"/>
</dbReference>
<dbReference type="PRO" id="PR:Q64481"/>
<dbReference type="Proteomes" id="UP000000589">
    <property type="component" value="Chromosome 5"/>
</dbReference>
<dbReference type="RNAct" id="Q64481">
    <property type="molecule type" value="protein"/>
</dbReference>
<dbReference type="Bgee" id="ENSMUSG00000038656">
    <property type="expression patterns" value="Expressed in hepatobiliary system and 15 other cell types or tissues"/>
</dbReference>
<dbReference type="GO" id="GO:0005789">
    <property type="term" value="C:endoplasmic reticulum membrane"/>
    <property type="evidence" value="ECO:0007669"/>
    <property type="project" value="UniProtKB-SubCell"/>
</dbReference>
<dbReference type="GO" id="GO:0020037">
    <property type="term" value="F:heme binding"/>
    <property type="evidence" value="ECO:0007669"/>
    <property type="project" value="InterPro"/>
</dbReference>
<dbReference type="GO" id="GO:0005506">
    <property type="term" value="F:iron ion binding"/>
    <property type="evidence" value="ECO:0007669"/>
    <property type="project" value="InterPro"/>
</dbReference>
<dbReference type="GO" id="GO:0016712">
    <property type="term" value="F:oxidoreductase activity, acting on paired donors, with incorporation or reduction of molecular oxygen, reduced flavin or flavoprotein as one donor, and incorporation of one atom of oxygen"/>
    <property type="evidence" value="ECO:0007669"/>
    <property type="project" value="UniProtKB-EC"/>
</dbReference>
<dbReference type="CDD" id="cd20650">
    <property type="entry name" value="CYP3A"/>
    <property type="match status" value="1"/>
</dbReference>
<dbReference type="FunFam" id="1.10.630.10:FF:000096">
    <property type="entry name" value="Cytochrome P450 3A4"/>
    <property type="match status" value="1"/>
</dbReference>
<dbReference type="Gene3D" id="1.10.630.10">
    <property type="entry name" value="Cytochrome P450"/>
    <property type="match status" value="1"/>
</dbReference>
<dbReference type="InterPro" id="IPR001128">
    <property type="entry name" value="Cyt_P450"/>
</dbReference>
<dbReference type="InterPro" id="IPR017972">
    <property type="entry name" value="Cyt_P450_CS"/>
</dbReference>
<dbReference type="InterPro" id="IPR008072">
    <property type="entry name" value="Cyt_P450_E_CYP3A"/>
</dbReference>
<dbReference type="InterPro" id="IPR002402">
    <property type="entry name" value="Cyt_P450_E_grp-II"/>
</dbReference>
<dbReference type="InterPro" id="IPR036396">
    <property type="entry name" value="Cyt_P450_sf"/>
</dbReference>
<dbReference type="InterPro" id="IPR050705">
    <property type="entry name" value="Cytochrome_P450_3A"/>
</dbReference>
<dbReference type="PANTHER" id="PTHR24302:SF49">
    <property type="entry name" value="CYTOCHROME P450 3A-RELATED"/>
    <property type="match status" value="1"/>
</dbReference>
<dbReference type="PANTHER" id="PTHR24302">
    <property type="entry name" value="CYTOCHROME P450 FAMILY 3"/>
    <property type="match status" value="1"/>
</dbReference>
<dbReference type="Pfam" id="PF00067">
    <property type="entry name" value="p450"/>
    <property type="match status" value="1"/>
</dbReference>
<dbReference type="PRINTS" id="PR00464">
    <property type="entry name" value="EP450II"/>
</dbReference>
<dbReference type="PRINTS" id="PR01689">
    <property type="entry name" value="EP450IICYP3A"/>
</dbReference>
<dbReference type="PRINTS" id="PR00385">
    <property type="entry name" value="P450"/>
</dbReference>
<dbReference type="SUPFAM" id="SSF48264">
    <property type="entry name" value="Cytochrome P450"/>
    <property type="match status" value="1"/>
</dbReference>
<dbReference type="PROSITE" id="PS00086">
    <property type="entry name" value="CYTOCHROME_P450"/>
    <property type="match status" value="1"/>
</dbReference>
<proteinExistence type="evidence at transcript level"/>
<comment type="function">
    <text>Cytochromes P450 are a group of heme-thiolate monooxygenases. In liver microsomes, this enzyme is involved in an NADPH-dependent electron transport pathway. It oxidizes a variety of structurally unrelated compounds, including steroids, fatty acids, and xenobiotics.</text>
</comment>
<comment type="catalytic activity">
    <reaction>
        <text>an organic molecule + reduced [NADPH--hemoprotein reductase] + O2 = an alcohol + oxidized [NADPH--hemoprotein reductase] + H2O + H(+)</text>
        <dbReference type="Rhea" id="RHEA:17149"/>
        <dbReference type="Rhea" id="RHEA-COMP:11964"/>
        <dbReference type="Rhea" id="RHEA-COMP:11965"/>
        <dbReference type="ChEBI" id="CHEBI:15377"/>
        <dbReference type="ChEBI" id="CHEBI:15378"/>
        <dbReference type="ChEBI" id="CHEBI:15379"/>
        <dbReference type="ChEBI" id="CHEBI:30879"/>
        <dbReference type="ChEBI" id="CHEBI:57618"/>
        <dbReference type="ChEBI" id="CHEBI:58210"/>
        <dbReference type="ChEBI" id="CHEBI:142491"/>
        <dbReference type="EC" id="1.14.14.1"/>
    </reaction>
</comment>
<comment type="cofactor">
    <cofactor evidence="1">
        <name>heme</name>
        <dbReference type="ChEBI" id="CHEBI:30413"/>
    </cofactor>
</comment>
<comment type="subcellular location">
    <subcellularLocation>
        <location>Endoplasmic reticulum membrane</location>
        <topology>Peripheral membrane protein</topology>
    </subcellularLocation>
    <subcellularLocation>
        <location>Microsome membrane</location>
        <topology>Peripheral membrane protein</topology>
    </subcellularLocation>
</comment>
<comment type="developmental stage">
    <text>Fetal- and puberty-specific.</text>
</comment>
<comment type="induction">
    <text>P450 can be induced to high levels in liver and other tissues by various foreign compounds, including drugs, pesticides, and carcinogens.</text>
</comment>
<comment type="similarity">
    <text evidence="2">Belongs to the cytochrome P450 family.</text>
</comment>
<organism>
    <name type="scientific">Mus musculus</name>
    <name type="common">Mouse</name>
    <dbReference type="NCBI Taxonomy" id="10090"/>
    <lineage>
        <taxon>Eukaryota</taxon>
        <taxon>Metazoa</taxon>
        <taxon>Chordata</taxon>
        <taxon>Craniata</taxon>
        <taxon>Vertebrata</taxon>
        <taxon>Euteleostomi</taxon>
        <taxon>Mammalia</taxon>
        <taxon>Eutheria</taxon>
        <taxon>Euarchontoglires</taxon>
        <taxon>Glires</taxon>
        <taxon>Rodentia</taxon>
        <taxon>Myomorpha</taxon>
        <taxon>Muroidea</taxon>
        <taxon>Muridae</taxon>
        <taxon>Murinae</taxon>
        <taxon>Mus</taxon>
        <taxon>Mus</taxon>
    </lineage>
</organism>
<feature type="chain" id="PRO_0000051799" description="Cytochrome P450 3A16">
    <location>
        <begin position="1"/>
        <end position="504"/>
    </location>
</feature>
<feature type="binding site" description="axial binding residue" evidence="1">
    <location>
        <position position="443"/>
    </location>
    <ligand>
        <name>heme</name>
        <dbReference type="ChEBI" id="CHEBI:30413"/>
    </ligand>
    <ligandPart>
        <name>Fe</name>
        <dbReference type="ChEBI" id="CHEBI:18248"/>
    </ligandPart>
</feature>
<feature type="sequence conflict" description="In Ref. 1; BAA05133." evidence="2" ref="1">
    <original>C</original>
    <variation>Y</variation>
    <location>
        <position position="28"/>
    </location>
</feature>
<reference key="1">
    <citation type="journal article" date="1994" name="Eur. J. Biochem.">
        <title>A novel form of mouse cytochrome P450 3A (Cyp3a-16). Its cDNA cloning and expression in fetal liver.</title>
        <authorList>
            <person name="Itoh S."/>
            <person name="Satoh M."/>
            <person name="Abe Y."/>
            <person name="Hashimoto H."/>
            <person name="Yanagimoto T."/>
            <person name="Kamataki T."/>
        </authorList>
    </citation>
    <scope>NUCLEOTIDE SEQUENCE [MRNA]</scope>
    <source>
        <strain>ICR</strain>
        <tissue>Liver</tissue>
    </source>
</reference>
<reference key="2">
    <citation type="journal article" date="2009" name="PLoS Biol.">
        <title>Lineage-specific biology revealed by a finished genome assembly of the mouse.</title>
        <authorList>
            <person name="Church D.M."/>
            <person name="Goodstadt L."/>
            <person name="Hillier L.W."/>
            <person name="Zody M.C."/>
            <person name="Goldstein S."/>
            <person name="She X."/>
            <person name="Bult C.J."/>
            <person name="Agarwala R."/>
            <person name="Cherry J.L."/>
            <person name="DiCuccio M."/>
            <person name="Hlavina W."/>
            <person name="Kapustin Y."/>
            <person name="Meric P."/>
            <person name="Maglott D."/>
            <person name="Birtle Z."/>
            <person name="Marques A.C."/>
            <person name="Graves T."/>
            <person name="Zhou S."/>
            <person name="Teague B."/>
            <person name="Potamousis K."/>
            <person name="Churas C."/>
            <person name="Place M."/>
            <person name="Herschleb J."/>
            <person name="Runnheim R."/>
            <person name="Forrest D."/>
            <person name="Amos-Landgraf J."/>
            <person name="Schwartz D.C."/>
            <person name="Cheng Z."/>
            <person name="Lindblad-Toh K."/>
            <person name="Eichler E.E."/>
            <person name="Ponting C.P."/>
        </authorList>
    </citation>
    <scope>NUCLEOTIDE SEQUENCE [LARGE SCALE GENOMIC DNA]</scope>
    <source>
        <strain>C57BL/6J</strain>
    </source>
</reference>
<keyword id="KW-0256">Endoplasmic reticulum</keyword>
<keyword id="KW-0349">Heme</keyword>
<keyword id="KW-0408">Iron</keyword>
<keyword id="KW-0472">Membrane</keyword>
<keyword id="KW-0479">Metal-binding</keyword>
<keyword id="KW-0492">Microsome</keyword>
<keyword id="KW-0503">Monooxygenase</keyword>
<keyword id="KW-0560">Oxidoreductase</keyword>
<keyword id="KW-1185">Reference proteome</keyword>
<sequence>MNLFSALSLDTLVLLAIILVLLYRYGTCTHGLFKKQGIPGPKPLPFLGTVLNYYKGLWKFDMECYEKYGKTWGLFDGQIPLFVITDPETIKNVLVKECFSVFTNRQDFFPVGIMSKSISLAKDEEWKRYRALLSPTFTSGNLKEMFPVIEQYGDILVKYLRQEAEKGKPVAVKDVLGAYSMDVIISTTFGVNIDSLNNPEDPFVENAKKVLRFDYFDPLSLSVALFPFLTPIYEMLNICMFPKDSIEFFKKFVDRMTENRLDSKQKHRVDFIYLMMEAYNKSKDKDSHKALSEIEITAQSIIFIFAGYETTSSILSFTVYSLATHPDIQKKLQEEIDEALPNKAPPTYDTVMAMEYLDMVLNETLRLYPITNRLQRVCKKDVEINGIYIPKGSTVIIPSYVLHHDPQHWPEPEEFQPERFSKENKGSIDPYVYLPFGNGPRNCIGMRFALMNMKLALIKVLQNFSFQPCKETQIPLKLSRELLLQPVKPIVLKVVPRDAVITGA</sequence>